<evidence type="ECO:0000255" key="1">
    <source>
        <dbReference type="HAMAP-Rule" id="MF_00102"/>
    </source>
</evidence>
<evidence type="ECO:0000305" key="2"/>
<protein>
    <recommendedName>
        <fullName evidence="1">4-hydroxy-tetrahydrodipicolinate reductase</fullName>
        <shortName evidence="1">HTPA reductase</shortName>
        <ecNumber evidence="1">1.17.1.8</ecNumber>
    </recommendedName>
</protein>
<organism>
    <name type="scientific">Polynucleobacter necessarius subsp. necessarius (strain STIR1)</name>
    <dbReference type="NCBI Taxonomy" id="452638"/>
    <lineage>
        <taxon>Bacteria</taxon>
        <taxon>Pseudomonadati</taxon>
        <taxon>Pseudomonadota</taxon>
        <taxon>Betaproteobacteria</taxon>
        <taxon>Burkholderiales</taxon>
        <taxon>Burkholderiaceae</taxon>
        <taxon>Polynucleobacter</taxon>
    </lineage>
</organism>
<feature type="chain" id="PRO_1000093987" description="4-hydroxy-tetrahydrodipicolinate reductase">
    <location>
        <begin position="1"/>
        <end position="266"/>
    </location>
</feature>
<feature type="active site" description="Proton donor/acceptor" evidence="1">
    <location>
        <position position="153"/>
    </location>
</feature>
<feature type="active site" description="Proton donor" evidence="1">
    <location>
        <position position="157"/>
    </location>
</feature>
<feature type="binding site" evidence="1">
    <location>
        <begin position="7"/>
        <end position="12"/>
    </location>
    <ligand>
        <name>NAD(+)</name>
        <dbReference type="ChEBI" id="CHEBI:57540"/>
    </ligand>
</feature>
<feature type="binding site" evidence="1">
    <location>
        <position position="33"/>
    </location>
    <ligand>
        <name>NAD(+)</name>
        <dbReference type="ChEBI" id="CHEBI:57540"/>
    </ligand>
</feature>
<feature type="binding site" evidence="1">
    <location>
        <begin position="96"/>
        <end position="98"/>
    </location>
    <ligand>
        <name>NAD(+)</name>
        <dbReference type="ChEBI" id="CHEBI:57540"/>
    </ligand>
</feature>
<feature type="binding site" evidence="1">
    <location>
        <begin position="120"/>
        <end position="123"/>
    </location>
    <ligand>
        <name>NAD(+)</name>
        <dbReference type="ChEBI" id="CHEBI:57540"/>
    </ligand>
</feature>
<feature type="binding site" evidence="1">
    <location>
        <position position="154"/>
    </location>
    <ligand>
        <name>(S)-2,3,4,5-tetrahydrodipicolinate</name>
        <dbReference type="ChEBI" id="CHEBI:16845"/>
    </ligand>
</feature>
<feature type="binding site" evidence="1">
    <location>
        <begin position="163"/>
        <end position="164"/>
    </location>
    <ligand>
        <name>(S)-2,3,4,5-tetrahydrodipicolinate</name>
        <dbReference type="ChEBI" id="CHEBI:16845"/>
    </ligand>
</feature>
<reference key="1">
    <citation type="journal article" date="2013" name="Proc. Natl. Acad. Sci. U.S.A.">
        <title>Polynucleobacter necessarius, a model for genome reduction in both free-living and symbiotic bacteria.</title>
        <authorList>
            <person name="Boscaro V."/>
            <person name="Felletti M."/>
            <person name="Vannini C."/>
            <person name="Ackerman M.S."/>
            <person name="Chain P.S."/>
            <person name="Malfatti S."/>
            <person name="Vergez L.M."/>
            <person name="Shin M."/>
            <person name="Doak T.G."/>
            <person name="Lynch M."/>
            <person name="Petroni G."/>
        </authorList>
    </citation>
    <scope>NUCLEOTIDE SEQUENCE [LARGE SCALE GENOMIC DNA]</scope>
    <source>
        <strain>STIR1</strain>
    </source>
</reference>
<accession>B1XT71</accession>
<keyword id="KW-0028">Amino-acid biosynthesis</keyword>
<keyword id="KW-0963">Cytoplasm</keyword>
<keyword id="KW-0220">Diaminopimelate biosynthesis</keyword>
<keyword id="KW-0457">Lysine biosynthesis</keyword>
<keyword id="KW-0520">NAD</keyword>
<keyword id="KW-0521">NADP</keyword>
<keyword id="KW-0560">Oxidoreductase</keyword>
<gene>
    <name evidence="1" type="primary">dapB</name>
    <name type="ordered locus">Pnec_0253</name>
</gene>
<name>DAPB_POLNS</name>
<comment type="function">
    <text evidence="1">Catalyzes the conversion of 4-hydroxy-tetrahydrodipicolinate (HTPA) to tetrahydrodipicolinate.</text>
</comment>
<comment type="catalytic activity">
    <reaction evidence="1">
        <text>(S)-2,3,4,5-tetrahydrodipicolinate + NAD(+) + H2O = (2S,4S)-4-hydroxy-2,3,4,5-tetrahydrodipicolinate + NADH + H(+)</text>
        <dbReference type="Rhea" id="RHEA:35323"/>
        <dbReference type="ChEBI" id="CHEBI:15377"/>
        <dbReference type="ChEBI" id="CHEBI:15378"/>
        <dbReference type="ChEBI" id="CHEBI:16845"/>
        <dbReference type="ChEBI" id="CHEBI:57540"/>
        <dbReference type="ChEBI" id="CHEBI:57945"/>
        <dbReference type="ChEBI" id="CHEBI:67139"/>
        <dbReference type="EC" id="1.17.1.8"/>
    </reaction>
</comment>
<comment type="catalytic activity">
    <reaction evidence="1">
        <text>(S)-2,3,4,5-tetrahydrodipicolinate + NADP(+) + H2O = (2S,4S)-4-hydroxy-2,3,4,5-tetrahydrodipicolinate + NADPH + H(+)</text>
        <dbReference type="Rhea" id="RHEA:35331"/>
        <dbReference type="ChEBI" id="CHEBI:15377"/>
        <dbReference type="ChEBI" id="CHEBI:15378"/>
        <dbReference type="ChEBI" id="CHEBI:16845"/>
        <dbReference type="ChEBI" id="CHEBI:57783"/>
        <dbReference type="ChEBI" id="CHEBI:58349"/>
        <dbReference type="ChEBI" id="CHEBI:67139"/>
        <dbReference type="EC" id="1.17.1.8"/>
    </reaction>
</comment>
<comment type="pathway">
    <text evidence="1">Amino-acid biosynthesis; L-lysine biosynthesis via DAP pathway; (S)-tetrahydrodipicolinate from L-aspartate: step 4/4.</text>
</comment>
<comment type="subcellular location">
    <subcellularLocation>
        <location evidence="1">Cytoplasm</location>
    </subcellularLocation>
</comment>
<comment type="similarity">
    <text evidence="1">Belongs to the DapB family.</text>
</comment>
<comment type="caution">
    <text evidence="2">Was originally thought to be a dihydrodipicolinate reductase (DHDPR), catalyzing the conversion of dihydrodipicolinate to tetrahydrodipicolinate. However, it was shown in E.coli that the substrate of the enzymatic reaction is not dihydrodipicolinate (DHDP) but in fact (2S,4S)-4-hydroxy-2,3,4,5-tetrahydrodipicolinic acid (HTPA), the product released by the DapA-catalyzed reaction.</text>
</comment>
<proteinExistence type="inferred from homology"/>
<dbReference type="EC" id="1.17.1.8" evidence="1"/>
<dbReference type="EMBL" id="CP001010">
    <property type="protein sequence ID" value="ACB43548.1"/>
    <property type="molecule type" value="Genomic_DNA"/>
</dbReference>
<dbReference type="SMR" id="B1XT71"/>
<dbReference type="STRING" id="452638.Pnec_0253"/>
<dbReference type="KEGG" id="pne:Pnec_0253"/>
<dbReference type="eggNOG" id="COG0289">
    <property type="taxonomic scope" value="Bacteria"/>
</dbReference>
<dbReference type="HOGENOM" id="CLU_047479_2_1_4"/>
<dbReference type="OrthoDB" id="9790352at2"/>
<dbReference type="UniPathway" id="UPA00034">
    <property type="reaction ID" value="UER00018"/>
</dbReference>
<dbReference type="GO" id="GO:0005829">
    <property type="term" value="C:cytosol"/>
    <property type="evidence" value="ECO:0007669"/>
    <property type="project" value="TreeGrafter"/>
</dbReference>
<dbReference type="GO" id="GO:0008839">
    <property type="term" value="F:4-hydroxy-tetrahydrodipicolinate reductase"/>
    <property type="evidence" value="ECO:0007669"/>
    <property type="project" value="UniProtKB-EC"/>
</dbReference>
<dbReference type="GO" id="GO:0051287">
    <property type="term" value="F:NAD binding"/>
    <property type="evidence" value="ECO:0007669"/>
    <property type="project" value="UniProtKB-UniRule"/>
</dbReference>
<dbReference type="GO" id="GO:0050661">
    <property type="term" value="F:NADP binding"/>
    <property type="evidence" value="ECO:0007669"/>
    <property type="project" value="UniProtKB-UniRule"/>
</dbReference>
<dbReference type="GO" id="GO:0016726">
    <property type="term" value="F:oxidoreductase activity, acting on CH or CH2 groups, NAD or NADP as acceptor"/>
    <property type="evidence" value="ECO:0007669"/>
    <property type="project" value="UniProtKB-UniRule"/>
</dbReference>
<dbReference type="GO" id="GO:0019877">
    <property type="term" value="P:diaminopimelate biosynthetic process"/>
    <property type="evidence" value="ECO:0007669"/>
    <property type="project" value="UniProtKB-UniRule"/>
</dbReference>
<dbReference type="GO" id="GO:0009089">
    <property type="term" value="P:lysine biosynthetic process via diaminopimelate"/>
    <property type="evidence" value="ECO:0007669"/>
    <property type="project" value="UniProtKB-UniRule"/>
</dbReference>
<dbReference type="CDD" id="cd02274">
    <property type="entry name" value="DHDPR_N"/>
    <property type="match status" value="1"/>
</dbReference>
<dbReference type="FunFam" id="3.30.360.10:FF:000004">
    <property type="entry name" value="4-hydroxy-tetrahydrodipicolinate reductase"/>
    <property type="match status" value="1"/>
</dbReference>
<dbReference type="Gene3D" id="3.30.360.10">
    <property type="entry name" value="Dihydrodipicolinate Reductase, domain 2"/>
    <property type="match status" value="1"/>
</dbReference>
<dbReference type="Gene3D" id="3.40.50.720">
    <property type="entry name" value="NAD(P)-binding Rossmann-like Domain"/>
    <property type="match status" value="1"/>
</dbReference>
<dbReference type="HAMAP" id="MF_00102">
    <property type="entry name" value="DapB"/>
    <property type="match status" value="1"/>
</dbReference>
<dbReference type="InterPro" id="IPR022663">
    <property type="entry name" value="DapB_C"/>
</dbReference>
<dbReference type="InterPro" id="IPR000846">
    <property type="entry name" value="DapB_N"/>
</dbReference>
<dbReference type="InterPro" id="IPR022664">
    <property type="entry name" value="DapB_N_CS"/>
</dbReference>
<dbReference type="InterPro" id="IPR023940">
    <property type="entry name" value="DHDPR_bac"/>
</dbReference>
<dbReference type="InterPro" id="IPR036291">
    <property type="entry name" value="NAD(P)-bd_dom_sf"/>
</dbReference>
<dbReference type="NCBIfam" id="TIGR00036">
    <property type="entry name" value="dapB"/>
    <property type="match status" value="1"/>
</dbReference>
<dbReference type="PANTHER" id="PTHR20836:SF0">
    <property type="entry name" value="4-HYDROXY-TETRAHYDRODIPICOLINATE REDUCTASE 1, CHLOROPLASTIC-RELATED"/>
    <property type="match status" value="1"/>
</dbReference>
<dbReference type="PANTHER" id="PTHR20836">
    <property type="entry name" value="DIHYDRODIPICOLINATE REDUCTASE"/>
    <property type="match status" value="1"/>
</dbReference>
<dbReference type="Pfam" id="PF05173">
    <property type="entry name" value="DapB_C"/>
    <property type="match status" value="1"/>
</dbReference>
<dbReference type="Pfam" id="PF01113">
    <property type="entry name" value="DapB_N"/>
    <property type="match status" value="1"/>
</dbReference>
<dbReference type="PIRSF" id="PIRSF000161">
    <property type="entry name" value="DHPR"/>
    <property type="match status" value="1"/>
</dbReference>
<dbReference type="SUPFAM" id="SSF55347">
    <property type="entry name" value="Glyceraldehyde-3-phosphate dehydrogenase-like, C-terminal domain"/>
    <property type="match status" value="1"/>
</dbReference>
<dbReference type="SUPFAM" id="SSF51735">
    <property type="entry name" value="NAD(P)-binding Rossmann-fold domains"/>
    <property type="match status" value="1"/>
</dbReference>
<dbReference type="PROSITE" id="PS01298">
    <property type="entry name" value="DAPB"/>
    <property type="match status" value="1"/>
</dbReference>
<sequence>MKIAIAGTIGRMGKMLIEAVLNTADAQLVGALEHTSCPQLGEDAGAFLGKKTGVLISSDVAQVLANAQFLIDFTRPEGTMAHLAIAEKTGTKMIIGTTGLSADQIAGLKKVSANLAIVFAPNMSVGVNATFKLLEIAAKMLSQGYDIEIIEAHHKHKVDAPSGTALKMGEVIAEALGEKLDDVAVYAREGHTGERKEGSIGFAIIRGGDIVGDHTVLFAGDGERIEISHKSSSRQSYAQGSLRAARFLQNQKNGLFDMQDVLGLRK</sequence>